<feature type="chain" id="PRO_0000146369" description="Small ribosomal subunit protein uS12">
    <location>
        <begin position="1"/>
        <end position="148"/>
    </location>
</feature>
<gene>
    <name evidence="1" type="primary">rps12</name>
    <name type="ordered locus">MJ1046</name>
</gene>
<evidence type="ECO:0000255" key="1">
    <source>
        <dbReference type="HAMAP-Rule" id="MF_00403"/>
    </source>
</evidence>
<evidence type="ECO:0000305" key="2"/>
<reference key="1">
    <citation type="journal article" date="1996" name="Science">
        <title>Complete genome sequence of the methanogenic archaeon, Methanococcus jannaschii.</title>
        <authorList>
            <person name="Bult C.J."/>
            <person name="White O."/>
            <person name="Olsen G.J."/>
            <person name="Zhou L."/>
            <person name="Fleischmann R.D."/>
            <person name="Sutton G.G."/>
            <person name="Blake J.A."/>
            <person name="FitzGerald L.M."/>
            <person name="Clayton R.A."/>
            <person name="Gocayne J.D."/>
            <person name="Kerlavage A.R."/>
            <person name="Dougherty B.A."/>
            <person name="Tomb J.-F."/>
            <person name="Adams M.D."/>
            <person name="Reich C.I."/>
            <person name="Overbeek R."/>
            <person name="Kirkness E.F."/>
            <person name="Weinstock K.G."/>
            <person name="Merrick J.M."/>
            <person name="Glodek A."/>
            <person name="Scott J.L."/>
            <person name="Geoghagen N.S.M."/>
            <person name="Weidman J.F."/>
            <person name="Fuhrmann J.L."/>
            <person name="Nguyen D."/>
            <person name="Utterback T.R."/>
            <person name="Kelley J.M."/>
            <person name="Peterson J.D."/>
            <person name="Sadow P.W."/>
            <person name="Hanna M.C."/>
            <person name="Cotton M.D."/>
            <person name="Roberts K.M."/>
            <person name="Hurst M.A."/>
            <person name="Kaine B.P."/>
            <person name="Borodovsky M."/>
            <person name="Klenk H.-P."/>
            <person name="Fraser C.M."/>
            <person name="Smith H.O."/>
            <person name="Woese C.R."/>
            <person name="Venter J.C."/>
        </authorList>
    </citation>
    <scope>NUCLEOTIDE SEQUENCE [LARGE SCALE GENOMIC DNA]</scope>
    <source>
        <strain>ATCC 43067 / DSM 2661 / JAL-1 / JCM 10045 / NBRC 100440</strain>
    </source>
</reference>
<proteinExistence type="inferred from homology"/>
<dbReference type="EMBL" id="L77117">
    <property type="protein sequence ID" value="AAB99050.1"/>
    <property type="molecule type" value="Genomic_DNA"/>
</dbReference>
<dbReference type="RefSeq" id="WP_010870559.1">
    <property type="nucleotide sequence ID" value="NC_000909.1"/>
</dbReference>
<dbReference type="SMR" id="P54062"/>
<dbReference type="FunCoup" id="P54062">
    <property type="interactions" value="167"/>
</dbReference>
<dbReference type="STRING" id="243232.MJ_1046"/>
<dbReference type="PaxDb" id="243232-MJ_1046"/>
<dbReference type="EnsemblBacteria" id="AAB99050">
    <property type="protein sequence ID" value="AAB99050"/>
    <property type="gene ID" value="MJ_1046"/>
</dbReference>
<dbReference type="GeneID" id="24891505"/>
<dbReference type="KEGG" id="mja:MJ_1046"/>
<dbReference type="eggNOG" id="arCOG04255">
    <property type="taxonomic scope" value="Archaea"/>
</dbReference>
<dbReference type="HOGENOM" id="CLU_115574_0_1_2"/>
<dbReference type="InParanoid" id="P54062"/>
<dbReference type="OrthoDB" id="45154at2157"/>
<dbReference type="PhylomeDB" id="P54062"/>
<dbReference type="Proteomes" id="UP000000805">
    <property type="component" value="Chromosome"/>
</dbReference>
<dbReference type="GO" id="GO:0022627">
    <property type="term" value="C:cytosolic small ribosomal subunit"/>
    <property type="evidence" value="ECO:0000318"/>
    <property type="project" value="GO_Central"/>
</dbReference>
<dbReference type="GO" id="GO:0005840">
    <property type="term" value="C:ribosome"/>
    <property type="evidence" value="ECO:0000318"/>
    <property type="project" value="GO_Central"/>
</dbReference>
<dbReference type="GO" id="GO:0019843">
    <property type="term" value="F:rRNA binding"/>
    <property type="evidence" value="ECO:0007669"/>
    <property type="project" value="UniProtKB-UniRule"/>
</dbReference>
<dbReference type="GO" id="GO:0003735">
    <property type="term" value="F:structural constituent of ribosome"/>
    <property type="evidence" value="ECO:0000318"/>
    <property type="project" value="GO_Central"/>
</dbReference>
<dbReference type="GO" id="GO:0006412">
    <property type="term" value="P:translation"/>
    <property type="evidence" value="ECO:0000318"/>
    <property type="project" value="GO_Central"/>
</dbReference>
<dbReference type="CDD" id="cd03367">
    <property type="entry name" value="Ribosomal_S23"/>
    <property type="match status" value="1"/>
</dbReference>
<dbReference type="FunFam" id="2.40.50.140:FF:000007">
    <property type="entry name" value="40S ribosomal protein S23"/>
    <property type="match status" value="1"/>
</dbReference>
<dbReference type="Gene3D" id="2.40.50.140">
    <property type="entry name" value="Nucleic acid-binding proteins"/>
    <property type="match status" value="1"/>
</dbReference>
<dbReference type="HAMAP" id="MF_00403_A">
    <property type="entry name" value="Ribosomal_uS12_A"/>
    <property type="match status" value="1"/>
</dbReference>
<dbReference type="InterPro" id="IPR012340">
    <property type="entry name" value="NA-bd_OB-fold"/>
</dbReference>
<dbReference type="InterPro" id="IPR006032">
    <property type="entry name" value="Ribosomal_uS12"/>
</dbReference>
<dbReference type="InterPro" id="IPR022863">
    <property type="entry name" value="Ribosomal_uS12_arc"/>
</dbReference>
<dbReference type="InterPro" id="IPR005680">
    <property type="entry name" value="Ribosomal_uS12_euk/arc"/>
</dbReference>
<dbReference type="NCBIfam" id="NF003254">
    <property type="entry name" value="PRK04211.1"/>
    <property type="match status" value="1"/>
</dbReference>
<dbReference type="NCBIfam" id="TIGR00982">
    <property type="entry name" value="uS12_E_A"/>
    <property type="match status" value="1"/>
</dbReference>
<dbReference type="PANTHER" id="PTHR11652">
    <property type="entry name" value="30S RIBOSOMAL PROTEIN S12 FAMILY MEMBER"/>
    <property type="match status" value="1"/>
</dbReference>
<dbReference type="Pfam" id="PF00164">
    <property type="entry name" value="Ribosom_S12_S23"/>
    <property type="match status" value="1"/>
</dbReference>
<dbReference type="PIRSF" id="PIRSF002133">
    <property type="entry name" value="Ribosomal_S12/S23"/>
    <property type="match status" value="1"/>
</dbReference>
<dbReference type="SUPFAM" id="SSF50249">
    <property type="entry name" value="Nucleic acid-binding proteins"/>
    <property type="match status" value="1"/>
</dbReference>
<dbReference type="PROSITE" id="PS00055">
    <property type="entry name" value="RIBOSOMAL_S12"/>
    <property type="match status" value="1"/>
</dbReference>
<name>RS12_METJA</name>
<sequence>MSGSKSPRGEFAGRKLRLKRKWCRWHDYNYVRRVLKLKEKYDPLEGAPMARGIVIEKVGLEAKQPNSAIRKCVRVQLIKNGRVVTAFCPGNHAINFIDEHDEVIIEGIGGPKGPRAKGDIPGVKYKVIMVGRNSLRELVRGRQEKIKR</sequence>
<accession>P54062</accession>
<keyword id="KW-1185">Reference proteome</keyword>
<keyword id="KW-0687">Ribonucleoprotein</keyword>
<keyword id="KW-0689">Ribosomal protein</keyword>
<keyword id="KW-0694">RNA-binding</keyword>
<keyword id="KW-0699">rRNA-binding</keyword>
<organism>
    <name type="scientific">Methanocaldococcus jannaschii (strain ATCC 43067 / DSM 2661 / JAL-1 / JCM 10045 / NBRC 100440)</name>
    <name type="common">Methanococcus jannaschii</name>
    <dbReference type="NCBI Taxonomy" id="243232"/>
    <lineage>
        <taxon>Archaea</taxon>
        <taxon>Methanobacteriati</taxon>
        <taxon>Methanobacteriota</taxon>
        <taxon>Methanomada group</taxon>
        <taxon>Methanococci</taxon>
        <taxon>Methanococcales</taxon>
        <taxon>Methanocaldococcaceae</taxon>
        <taxon>Methanocaldococcus</taxon>
    </lineage>
</organism>
<protein>
    <recommendedName>
        <fullName evidence="1">Small ribosomal subunit protein uS12</fullName>
    </recommendedName>
    <alternativeName>
        <fullName evidence="2">30S ribosomal protein S12</fullName>
    </alternativeName>
</protein>
<comment type="function">
    <text evidence="1">With S4 and S5 plays an important role in translational accuracy. Located at the interface of the 30S and 50S subunits.</text>
</comment>
<comment type="subunit">
    <text evidence="1">Part of the 30S ribosomal subunit.</text>
</comment>
<comment type="similarity">
    <text evidence="1">Belongs to the universal ribosomal protein uS12 family.</text>
</comment>